<organismHost>
    <name type="scientific">Bacillus subtilis</name>
    <dbReference type="NCBI Taxonomy" id="1423"/>
</organismHost>
<comment type="function">
    <text evidence="2">Endolysin with lysozyme activity that degrades host peptidoglycans and participates with the holin and spanin proteins in the sequential events which lead to the programmed host cell lysis releasing the mature viral particles. Once the holin has permeabilized the host cell membrane, the endolysin can reach the periplasm and break down the peptidoglycan layer.</text>
</comment>
<comment type="catalytic activity">
    <reaction evidence="2">
        <text>Hydrolysis of (1-&gt;4)-beta-linkages between N-acetylmuramic acid and N-acetyl-D-glucosamine residues in a peptidoglycan and between N-acetyl-D-glucosamine residues in chitodextrins.</text>
        <dbReference type="EC" id="3.2.1.17"/>
    </reaction>
</comment>
<comment type="subcellular location">
    <subcellularLocation>
        <location evidence="2">Host cytoplasm</location>
    </subcellularLocation>
    <text evidence="2">The endolysin is cytoplasmic, but can reach the periplasmic space with the help of the holins which disrupt the host cell membrane.</text>
</comment>
<comment type="domain">
    <text evidence="1">LysM domains are thought to be involved in peptidoglycan binding.</text>
</comment>
<comment type="similarity">
    <text evidence="2">Belongs to the glycosyl hydrolase 24 family.</text>
</comment>
<comment type="caution">
    <text evidence="2">Lacks the conserved Asp active site.</text>
</comment>
<proteinExistence type="inferred from homology"/>
<protein>
    <recommendedName>
        <fullName evidence="2">Endolysin</fullName>
        <ecNumber evidence="2">3.2.1.17</ecNumber>
    </recommendedName>
    <alternativeName>
        <fullName evidence="2">Lysis protein</fullName>
    </alternativeName>
    <alternativeName>
        <fullName evidence="2">Lysozyme</fullName>
    </alternativeName>
    <alternativeName>
        <fullName evidence="2">Muramidase</fullName>
    </alternativeName>
    <alternativeName>
        <fullName>Protein p15</fullName>
    </alternativeName>
</protein>
<dbReference type="EC" id="3.2.1.17" evidence="2"/>
<dbReference type="EMBL" id="X99260">
    <property type="protein sequence ID" value="CAA67646.1"/>
    <property type="molecule type" value="Genomic_DNA"/>
</dbReference>
<dbReference type="RefSeq" id="NP_690649.1">
    <property type="nucleotide sequence ID" value="NC_004165.1"/>
</dbReference>
<dbReference type="SMR" id="Q37896"/>
<dbReference type="CAZy" id="CBM50">
    <property type="family name" value="Carbohydrate-Binding Module Family 50"/>
</dbReference>
<dbReference type="CAZy" id="GH24">
    <property type="family name" value="Glycoside Hydrolase Family 24"/>
</dbReference>
<dbReference type="KEGG" id="vg:955364"/>
<dbReference type="Proteomes" id="UP000000971">
    <property type="component" value="Segment"/>
</dbReference>
<dbReference type="GO" id="GO:0030430">
    <property type="term" value="C:host cell cytoplasm"/>
    <property type="evidence" value="ECO:0007669"/>
    <property type="project" value="UniProtKB-SubCell"/>
</dbReference>
<dbReference type="GO" id="GO:0003796">
    <property type="term" value="F:lysozyme activity"/>
    <property type="evidence" value="ECO:0007669"/>
    <property type="project" value="UniProtKB-UniRule"/>
</dbReference>
<dbReference type="GO" id="GO:0016998">
    <property type="term" value="P:cell wall macromolecule catabolic process"/>
    <property type="evidence" value="ECO:0007669"/>
    <property type="project" value="InterPro"/>
</dbReference>
<dbReference type="GO" id="GO:0042742">
    <property type="term" value="P:defense response to bacterium"/>
    <property type="evidence" value="ECO:0007669"/>
    <property type="project" value="UniProtKB-KW"/>
</dbReference>
<dbReference type="GO" id="GO:0009253">
    <property type="term" value="P:peptidoglycan catabolic process"/>
    <property type="evidence" value="ECO:0007669"/>
    <property type="project" value="UniProtKB-UniRule"/>
</dbReference>
<dbReference type="GO" id="GO:0044659">
    <property type="term" value="P:viral release from host cell by cytolysis"/>
    <property type="evidence" value="ECO:0007669"/>
    <property type="project" value="UniProtKB-UniRule"/>
</dbReference>
<dbReference type="CDD" id="cd00118">
    <property type="entry name" value="LysM"/>
    <property type="match status" value="2"/>
</dbReference>
<dbReference type="CDD" id="cd00737">
    <property type="entry name" value="lyz_endolysin_autolysin"/>
    <property type="match status" value="1"/>
</dbReference>
<dbReference type="Gene3D" id="1.10.530.40">
    <property type="match status" value="1"/>
</dbReference>
<dbReference type="Gene3D" id="3.10.350.10">
    <property type="entry name" value="LysM domain"/>
    <property type="match status" value="2"/>
</dbReference>
<dbReference type="HAMAP" id="MF_04110">
    <property type="entry name" value="ENDOLYSIN_T4"/>
    <property type="match status" value="1"/>
</dbReference>
<dbReference type="InterPro" id="IPR051018">
    <property type="entry name" value="Bacteriophage_GH24"/>
</dbReference>
<dbReference type="InterPro" id="IPR033907">
    <property type="entry name" value="Endolysin_autolysin"/>
</dbReference>
<dbReference type="InterPro" id="IPR034690">
    <property type="entry name" value="Endolysin_T4_type"/>
</dbReference>
<dbReference type="InterPro" id="IPR002196">
    <property type="entry name" value="Glyco_hydro_24"/>
</dbReference>
<dbReference type="InterPro" id="IPR018392">
    <property type="entry name" value="LysM_dom"/>
</dbReference>
<dbReference type="InterPro" id="IPR036779">
    <property type="entry name" value="LysM_dom_sf"/>
</dbReference>
<dbReference type="InterPro" id="IPR023346">
    <property type="entry name" value="Lysozyme-like_dom_sf"/>
</dbReference>
<dbReference type="InterPro" id="IPR023347">
    <property type="entry name" value="Lysozyme_dom_sf"/>
</dbReference>
<dbReference type="PANTHER" id="PTHR38107">
    <property type="match status" value="1"/>
</dbReference>
<dbReference type="PANTHER" id="PTHR38107:SF3">
    <property type="entry name" value="LYSOZYME RRRD-RELATED"/>
    <property type="match status" value="1"/>
</dbReference>
<dbReference type="Pfam" id="PF01476">
    <property type="entry name" value="LysM"/>
    <property type="match status" value="2"/>
</dbReference>
<dbReference type="Pfam" id="PF00959">
    <property type="entry name" value="Phage_lysozyme"/>
    <property type="match status" value="1"/>
</dbReference>
<dbReference type="SMART" id="SM00257">
    <property type="entry name" value="LysM"/>
    <property type="match status" value="2"/>
</dbReference>
<dbReference type="SUPFAM" id="SSF54106">
    <property type="entry name" value="LysM domain"/>
    <property type="match status" value="2"/>
</dbReference>
<dbReference type="SUPFAM" id="SSF53955">
    <property type="entry name" value="Lysozyme-like"/>
    <property type="match status" value="1"/>
</dbReference>
<dbReference type="PROSITE" id="PS51782">
    <property type="entry name" value="LYSM"/>
    <property type="match status" value="2"/>
</dbReference>
<gene>
    <name type="primary">15</name>
</gene>
<feature type="chain" id="PRO_0000218092" description="Endolysin">
    <location>
        <begin position="1"/>
        <end position="263"/>
    </location>
</feature>
<feature type="active site" description="Proton donor/acceptor" evidence="2">
    <location>
        <position position="15"/>
    </location>
</feature>
<organism>
    <name type="scientific">Bacillus phage B103</name>
    <name type="common">Bacteriophage B103</name>
    <dbReference type="NCBI Taxonomy" id="2994042"/>
    <lineage>
        <taxon>Viruses</taxon>
        <taxon>Duplodnaviria</taxon>
        <taxon>Heunggongvirae</taxon>
        <taxon>Uroviricota</taxon>
        <taxon>Caudoviricetes</taxon>
        <taxon>Salasmaviridae</taxon>
        <taxon>Picovirinae</taxon>
        <taxon>Beecentumtrevirus</taxon>
        <taxon>Beecentumtrevirus B103</taxon>
    </lineage>
</organism>
<sequence length="263" mass="29264">MNISQAGINLIKSFEGLRTKAYKAVPTEKYYTIGYGHYGSDVHPCQVISEEKAEKLLRDDVQEFVDGVDKLLKVDVTQSQFDALVSFAYNVGLGALKSSTLLQYLNAGNFQKAANEFLKWNKSGGKVYNGLVKRREQERTLFLTGESKNVSRETSKPKTSKTNTHVVKKGDTLSEIAKKIKTSTKTLLELNPTIKNPNKIYVGQRINVGGSPVKSTLKYKIKRGETLTGIAKKNKTTVSQLMKLNPNIKNANNIYAGQTIRLK</sequence>
<accession>Q37896</accession>
<keyword id="KW-0929">Antimicrobial</keyword>
<keyword id="KW-0081">Bacteriolytic enzyme</keyword>
<keyword id="KW-0204">Cytolysis</keyword>
<keyword id="KW-0326">Glycosidase</keyword>
<keyword id="KW-0578">Host cell lysis by virus</keyword>
<keyword id="KW-1035">Host cytoplasm</keyword>
<keyword id="KW-0378">Hydrolase</keyword>
<keyword id="KW-1188">Viral release from host cell</keyword>
<evidence type="ECO:0000250" key="1">
    <source>
        <dbReference type="UniProtKB" id="P11187"/>
    </source>
</evidence>
<evidence type="ECO:0000255" key="2">
    <source>
        <dbReference type="HAMAP-Rule" id="MF_04110"/>
    </source>
</evidence>
<reference key="1">
    <citation type="journal article" date="1997" name="Gene">
        <title>Bacteriophage B103: complete DNA sequence of its genome and relationship to other Bacillus phages.</title>
        <authorList>
            <person name="Pecenkova T."/>
            <person name="Benes V."/>
            <person name="Paces J."/>
            <person name="Vlcek C."/>
            <person name="Paces V."/>
        </authorList>
    </citation>
    <scope>NUCLEOTIDE SEQUENCE [LARGE SCALE GENOMIC DNA]</scope>
</reference>
<name>ENLYS_BPB03</name>